<dbReference type="EMBL" id="CP000942">
    <property type="protein sequence ID" value="ACA32932.1"/>
    <property type="molecule type" value="Genomic_DNA"/>
</dbReference>
<dbReference type="RefSeq" id="WP_006688875.1">
    <property type="nucleotide sequence ID" value="NC_010503.1"/>
</dbReference>
<dbReference type="SMR" id="B1AIN1"/>
<dbReference type="GeneID" id="29672578"/>
<dbReference type="KEGG" id="upa:UPA3_0250"/>
<dbReference type="HOGENOM" id="CLU_093315_2_3_14"/>
<dbReference type="Proteomes" id="UP000002162">
    <property type="component" value="Chromosome"/>
</dbReference>
<dbReference type="GO" id="GO:1990904">
    <property type="term" value="C:ribonucleoprotein complex"/>
    <property type="evidence" value="ECO:0007669"/>
    <property type="project" value="UniProtKB-KW"/>
</dbReference>
<dbReference type="GO" id="GO:0005840">
    <property type="term" value="C:ribosome"/>
    <property type="evidence" value="ECO:0007669"/>
    <property type="project" value="UniProtKB-KW"/>
</dbReference>
<dbReference type="GO" id="GO:0019843">
    <property type="term" value="F:rRNA binding"/>
    <property type="evidence" value="ECO:0007669"/>
    <property type="project" value="UniProtKB-UniRule"/>
</dbReference>
<dbReference type="GO" id="GO:0003735">
    <property type="term" value="F:structural constituent of ribosome"/>
    <property type="evidence" value="ECO:0007669"/>
    <property type="project" value="InterPro"/>
</dbReference>
<dbReference type="GO" id="GO:0006412">
    <property type="term" value="P:translation"/>
    <property type="evidence" value="ECO:0007669"/>
    <property type="project" value="UniProtKB-UniRule"/>
</dbReference>
<dbReference type="CDD" id="cd06089">
    <property type="entry name" value="KOW_RPL26"/>
    <property type="match status" value="1"/>
</dbReference>
<dbReference type="Gene3D" id="2.30.30.30">
    <property type="match status" value="1"/>
</dbReference>
<dbReference type="HAMAP" id="MF_01326_B">
    <property type="entry name" value="Ribosomal_uL24_B"/>
    <property type="match status" value="1"/>
</dbReference>
<dbReference type="InterPro" id="IPR005824">
    <property type="entry name" value="KOW"/>
</dbReference>
<dbReference type="InterPro" id="IPR014722">
    <property type="entry name" value="Rib_uL2_dom2"/>
</dbReference>
<dbReference type="InterPro" id="IPR003256">
    <property type="entry name" value="Ribosomal_uL24"/>
</dbReference>
<dbReference type="InterPro" id="IPR005825">
    <property type="entry name" value="Ribosomal_uL24_CS"/>
</dbReference>
<dbReference type="InterPro" id="IPR041988">
    <property type="entry name" value="Ribosomal_uL24_KOW"/>
</dbReference>
<dbReference type="InterPro" id="IPR008991">
    <property type="entry name" value="Translation_prot_SH3-like_sf"/>
</dbReference>
<dbReference type="NCBIfam" id="TIGR01079">
    <property type="entry name" value="rplX_bact"/>
    <property type="match status" value="1"/>
</dbReference>
<dbReference type="PANTHER" id="PTHR12903">
    <property type="entry name" value="MITOCHONDRIAL RIBOSOMAL PROTEIN L24"/>
    <property type="match status" value="1"/>
</dbReference>
<dbReference type="Pfam" id="PF00467">
    <property type="entry name" value="KOW"/>
    <property type="match status" value="1"/>
</dbReference>
<dbReference type="Pfam" id="PF17136">
    <property type="entry name" value="ribosomal_L24"/>
    <property type="match status" value="1"/>
</dbReference>
<dbReference type="SMART" id="SM00739">
    <property type="entry name" value="KOW"/>
    <property type="match status" value="1"/>
</dbReference>
<dbReference type="SUPFAM" id="SSF50104">
    <property type="entry name" value="Translation proteins SH3-like domain"/>
    <property type="match status" value="1"/>
</dbReference>
<dbReference type="PROSITE" id="PS01108">
    <property type="entry name" value="RIBOSOMAL_L24"/>
    <property type="match status" value="1"/>
</dbReference>
<comment type="function">
    <text evidence="1">One of two assembly initiator proteins, it binds directly to the 5'-end of the 23S rRNA, where it nucleates assembly of the 50S subunit.</text>
</comment>
<comment type="function">
    <text evidence="1">One of the proteins that surrounds the polypeptide exit tunnel on the outside of the subunit.</text>
</comment>
<comment type="subunit">
    <text evidence="1">Part of the 50S ribosomal subunit.</text>
</comment>
<comment type="similarity">
    <text evidence="1">Belongs to the universal ribosomal protein uL24 family.</text>
</comment>
<evidence type="ECO:0000255" key="1">
    <source>
        <dbReference type="HAMAP-Rule" id="MF_01326"/>
    </source>
</evidence>
<evidence type="ECO:0000305" key="2"/>
<reference key="1">
    <citation type="submission" date="2008-02" db="EMBL/GenBank/DDBJ databases">
        <title>Genome sequence of Ureaplasma parvum serovar 3.</title>
        <authorList>
            <person name="Methe B.A."/>
            <person name="Glass J."/>
            <person name="Waites K."/>
            <person name="Shrivastava S."/>
        </authorList>
    </citation>
    <scope>NUCLEOTIDE SEQUENCE [LARGE SCALE GENOMIC DNA]</scope>
    <source>
        <strain>ATCC 27815 / 27 / NCTC 11736</strain>
    </source>
</reference>
<sequence>MNRIKKGDTVVVISGKNKNKSGVVIQVNPKEQTALVEGVNKIKRHQKKDQTHEQSGIIEKEAPIRLCKLALVDPKGKDKGKATKVKYLLKDNKKVRVARKSGSELDVNKK</sequence>
<accession>B1AIN1</accession>
<organism>
    <name type="scientific">Ureaplasma parvum serovar 3 (strain ATCC 27815 / 27 / NCTC 11736)</name>
    <dbReference type="NCBI Taxonomy" id="505682"/>
    <lineage>
        <taxon>Bacteria</taxon>
        <taxon>Bacillati</taxon>
        <taxon>Mycoplasmatota</taxon>
        <taxon>Mycoplasmoidales</taxon>
        <taxon>Mycoplasmoidaceae</taxon>
        <taxon>Ureaplasma</taxon>
    </lineage>
</organism>
<protein>
    <recommendedName>
        <fullName evidence="1">Large ribosomal subunit protein uL24</fullName>
    </recommendedName>
    <alternativeName>
        <fullName evidence="2">50S ribosomal protein L24</fullName>
    </alternativeName>
</protein>
<keyword id="KW-0687">Ribonucleoprotein</keyword>
<keyword id="KW-0689">Ribosomal protein</keyword>
<keyword id="KW-0694">RNA-binding</keyword>
<keyword id="KW-0699">rRNA-binding</keyword>
<name>RL24_UREP2</name>
<feature type="chain" id="PRO_1000086503" description="Large ribosomal subunit protein uL24">
    <location>
        <begin position="1"/>
        <end position="110"/>
    </location>
</feature>
<proteinExistence type="inferred from homology"/>
<gene>
    <name evidence="1" type="primary">rplX</name>
    <name type="ordered locus">UPA3_0250</name>
</gene>